<name>LOLA_HELPH</name>
<protein>
    <recommendedName>
        <fullName evidence="1">Outer-membrane lipoprotein carrier protein</fullName>
    </recommendedName>
</protein>
<dbReference type="EMBL" id="CP000241">
    <property type="protein sequence ID" value="ABF84838.1"/>
    <property type="molecule type" value="Genomic_DNA"/>
</dbReference>
<dbReference type="RefSeq" id="WP_001201066.1">
    <property type="nucleotide sequence ID" value="NC_008086.1"/>
</dbReference>
<dbReference type="SMR" id="Q1CT84"/>
<dbReference type="KEGG" id="hpa:HPAG1_0771"/>
<dbReference type="HOGENOM" id="CLU_125914_0_0_7"/>
<dbReference type="GO" id="GO:0042597">
    <property type="term" value="C:periplasmic space"/>
    <property type="evidence" value="ECO:0007669"/>
    <property type="project" value="UniProtKB-SubCell"/>
</dbReference>
<dbReference type="GO" id="GO:0042953">
    <property type="term" value="P:lipoprotein transport"/>
    <property type="evidence" value="ECO:0007669"/>
    <property type="project" value="InterPro"/>
</dbReference>
<dbReference type="CDD" id="cd16325">
    <property type="entry name" value="LolA"/>
    <property type="match status" value="1"/>
</dbReference>
<dbReference type="FunFam" id="2.50.20.10:FF:000013">
    <property type="entry name" value="Outer-membrane lipoprotein carrier protein"/>
    <property type="match status" value="1"/>
</dbReference>
<dbReference type="Gene3D" id="2.50.20.10">
    <property type="entry name" value="Lipoprotein localisation LolA/LolB/LppX"/>
    <property type="match status" value="1"/>
</dbReference>
<dbReference type="HAMAP" id="MF_00240">
    <property type="entry name" value="LolA"/>
    <property type="match status" value="1"/>
</dbReference>
<dbReference type="InterPro" id="IPR029046">
    <property type="entry name" value="LolA/LolB/LppX"/>
</dbReference>
<dbReference type="InterPro" id="IPR004564">
    <property type="entry name" value="OM_lipoprot_carrier_LolA-like"/>
</dbReference>
<dbReference type="InterPro" id="IPR018323">
    <property type="entry name" value="OM_lipoprot_carrier_LolA_Pbac"/>
</dbReference>
<dbReference type="NCBIfam" id="NF000663">
    <property type="entry name" value="PRK00031.2-1"/>
    <property type="match status" value="1"/>
</dbReference>
<dbReference type="PANTHER" id="PTHR35869">
    <property type="entry name" value="OUTER-MEMBRANE LIPOPROTEIN CARRIER PROTEIN"/>
    <property type="match status" value="1"/>
</dbReference>
<dbReference type="PANTHER" id="PTHR35869:SF1">
    <property type="entry name" value="OUTER-MEMBRANE LIPOPROTEIN CARRIER PROTEIN"/>
    <property type="match status" value="1"/>
</dbReference>
<dbReference type="Pfam" id="PF03548">
    <property type="entry name" value="LolA"/>
    <property type="match status" value="1"/>
</dbReference>
<dbReference type="SUPFAM" id="SSF89392">
    <property type="entry name" value="Prokaryotic lipoproteins and lipoprotein localization factors"/>
    <property type="match status" value="1"/>
</dbReference>
<proteinExistence type="inferred from homology"/>
<reference key="1">
    <citation type="journal article" date="2006" name="Proc. Natl. Acad. Sci. U.S.A.">
        <title>The complete genome sequence of a chronic atrophic gastritis Helicobacter pylori strain: evolution during disease progression.</title>
        <authorList>
            <person name="Oh J.D."/>
            <person name="Kling-Baeckhed H."/>
            <person name="Giannakis M."/>
            <person name="Xu J."/>
            <person name="Fulton R.S."/>
            <person name="Fulton L.A."/>
            <person name="Cordum H.S."/>
            <person name="Wang C."/>
            <person name="Elliott G."/>
            <person name="Edwards J."/>
            <person name="Mardis E.R."/>
            <person name="Engstrand L.G."/>
            <person name="Gordon J.I."/>
        </authorList>
    </citation>
    <scope>NUCLEOTIDE SEQUENCE [LARGE SCALE GENOMIC DNA]</scope>
    <source>
        <strain>HPAG1</strain>
    </source>
</reference>
<gene>
    <name evidence="1" type="primary">lolA</name>
    <name type="ordered locus">HPAG1_0771</name>
</gene>
<keyword id="KW-0143">Chaperone</keyword>
<keyword id="KW-0574">Periplasm</keyword>
<keyword id="KW-0653">Protein transport</keyword>
<keyword id="KW-0732">Signal</keyword>
<keyword id="KW-0813">Transport</keyword>
<comment type="function">
    <text evidence="1">Participates in the translocation of lipoproteins from the inner membrane to the outer membrane. Only forms a complex with a lipoprotein if the residue after the N-terminal Cys is not an aspartate (The Asp acts as a targeting signal to indicate that the lipoprotein should stay in the inner membrane).</text>
</comment>
<comment type="subunit">
    <text evidence="1">Monomer.</text>
</comment>
<comment type="subcellular location">
    <subcellularLocation>
        <location evidence="1">Periplasm</location>
    </subcellularLocation>
</comment>
<comment type="similarity">
    <text evidence="1">Belongs to the LolA family.</text>
</comment>
<accession>Q1CT84</accession>
<sequence length="184" mass="21541">MRAFLKILMVLIFMSVAYAKNPSTLSKEEEVLQHLQSFSAHFKQVLKSEKPLVYYGVLKAKAPNWALWVYEKPLKKEIYMNDKEVVIYEPNLFQATITPLKDKTDFFTILKRLKKQDDGSFKTTINKTTYRLIFKDGKPFSLEFKDEMNNLVTITFSQAEINPTIADEIFVFKPKDENIDIVRQ</sequence>
<feature type="signal peptide" evidence="1">
    <location>
        <begin position="1"/>
        <end position="19"/>
    </location>
</feature>
<feature type="chain" id="PRO_1000005694" description="Outer-membrane lipoprotein carrier protein">
    <location>
        <begin position="20"/>
        <end position="184"/>
    </location>
</feature>
<organism>
    <name type="scientific">Helicobacter pylori (strain HPAG1)</name>
    <dbReference type="NCBI Taxonomy" id="357544"/>
    <lineage>
        <taxon>Bacteria</taxon>
        <taxon>Pseudomonadati</taxon>
        <taxon>Campylobacterota</taxon>
        <taxon>Epsilonproteobacteria</taxon>
        <taxon>Campylobacterales</taxon>
        <taxon>Helicobacteraceae</taxon>
        <taxon>Helicobacter</taxon>
    </lineage>
</organism>
<evidence type="ECO:0000255" key="1">
    <source>
        <dbReference type="HAMAP-Rule" id="MF_00240"/>
    </source>
</evidence>